<name>RL5_BORBR</name>
<dbReference type="EMBL" id="BX640437">
    <property type="protein sequence ID" value="CAE30545.1"/>
    <property type="molecule type" value="Genomic_DNA"/>
</dbReference>
<dbReference type="RefSeq" id="WP_003806918.1">
    <property type="nucleotide sequence ID" value="NC_002927.3"/>
</dbReference>
<dbReference type="SMR" id="Q7WRB1"/>
<dbReference type="GeneID" id="93206273"/>
<dbReference type="KEGG" id="bbr:BB0043"/>
<dbReference type="eggNOG" id="COG0094">
    <property type="taxonomic scope" value="Bacteria"/>
</dbReference>
<dbReference type="HOGENOM" id="CLU_061015_2_1_4"/>
<dbReference type="Proteomes" id="UP000001027">
    <property type="component" value="Chromosome"/>
</dbReference>
<dbReference type="GO" id="GO:1990904">
    <property type="term" value="C:ribonucleoprotein complex"/>
    <property type="evidence" value="ECO:0007669"/>
    <property type="project" value="UniProtKB-KW"/>
</dbReference>
<dbReference type="GO" id="GO:0005840">
    <property type="term" value="C:ribosome"/>
    <property type="evidence" value="ECO:0007669"/>
    <property type="project" value="UniProtKB-KW"/>
</dbReference>
<dbReference type="GO" id="GO:0019843">
    <property type="term" value="F:rRNA binding"/>
    <property type="evidence" value="ECO:0007669"/>
    <property type="project" value="UniProtKB-UniRule"/>
</dbReference>
<dbReference type="GO" id="GO:0003735">
    <property type="term" value="F:structural constituent of ribosome"/>
    <property type="evidence" value="ECO:0007669"/>
    <property type="project" value="InterPro"/>
</dbReference>
<dbReference type="GO" id="GO:0000049">
    <property type="term" value="F:tRNA binding"/>
    <property type="evidence" value="ECO:0007669"/>
    <property type="project" value="UniProtKB-UniRule"/>
</dbReference>
<dbReference type="GO" id="GO:0006412">
    <property type="term" value="P:translation"/>
    <property type="evidence" value="ECO:0007669"/>
    <property type="project" value="UniProtKB-UniRule"/>
</dbReference>
<dbReference type="FunFam" id="3.30.1440.10:FF:000001">
    <property type="entry name" value="50S ribosomal protein L5"/>
    <property type="match status" value="1"/>
</dbReference>
<dbReference type="Gene3D" id="3.30.1440.10">
    <property type="match status" value="1"/>
</dbReference>
<dbReference type="HAMAP" id="MF_01333_B">
    <property type="entry name" value="Ribosomal_uL5_B"/>
    <property type="match status" value="1"/>
</dbReference>
<dbReference type="InterPro" id="IPR002132">
    <property type="entry name" value="Ribosomal_uL5"/>
</dbReference>
<dbReference type="InterPro" id="IPR020930">
    <property type="entry name" value="Ribosomal_uL5_bac-type"/>
</dbReference>
<dbReference type="InterPro" id="IPR031309">
    <property type="entry name" value="Ribosomal_uL5_C"/>
</dbReference>
<dbReference type="InterPro" id="IPR020929">
    <property type="entry name" value="Ribosomal_uL5_CS"/>
</dbReference>
<dbReference type="InterPro" id="IPR022803">
    <property type="entry name" value="Ribosomal_uL5_dom_sf"/>
</dbReference>
<dbReference type="InterPro" id="IPR031310">
    <property type="entry name" value="Ribosomal_uL5_N"/>
</dbReference>
<dbReference type="NCBIfam" id="NF000585">
    <property type="entry name" value="PRK00010.1"/>
    <property type="match status" value="1"/>
</dbReference>
<dbReference type="PANTHER" id="PTHR11994">
    <property type="entry name" value="60S RIBOSOMAL PROTEIN L11-RELATED"/>
    <property type="match status" value="1"/>
</dbReference>
<dbReference type="Pfam" id="PF00281">
    <property type="entry name" value="Ribosomal_L5"/>
    <property type="match status" value="1"/>
</dbReference>
<dbReference type="Pfam" id="PF00673">
    <property type="entry name" value="Ribosomal_L5_C"/>
    <property type="match status" value="1"/>
</dbReference>
<dbReference type="PIRSF" id="PIRSF002161">
    <property type="entry name" value="Ribosomal_L5"/>
    <property type="match status" value="1"/>
</dbReference>
<dbReference type="SUPFAM" id="SSF55282">
    <property type="entry name" value="RL5-like"/>
    <property type="match status" value="1"/>
</dbReference>
<dbReference type="PROSITE" id="PS00358">
    <property type="entry name" value="RIBOSOMAL_L5"/>
    <property type="match status" value="1"/>
</dbReference>
<feature type="chain" id="PRO_0000124896" description="Large ribosomal subunit protein uL5">
    <location>
        <begin position="1"/>
        <end position="179"/>
    </location>
</feature>
<keyword id="KW-0687">Ribonucleoprotein</keyword>
<keyword id="KW-0689">Ribosomal protein</keyword>
<keyword id="KW-0694">RNA-binding</keyword>
<keyword id="KW-0699">rRNA-binding</keyword>
<keyword id="KW-0820">tRNA-binding</keyword>
<comment type="function">
    <text evidence="1">This is one of the proteins that bind and probably mediate the attachment of the 5S RNA into the large ribosomal subunit, where it forms part of the central protuberance. In the 70S ribosome it contacts protein S13 of the 30S subunit (bridge B1b), connecting the 2 subunits; this bridge is implicated in subunit movement. Contacts the P site tRNA; the 5S rRNA and some of its associated proteins might help stabilize positioning of ribosome-bound tRNAs.</text>
</comment>
<comment type="subunit">
    <text evidence="1">Part of the 50S ribosomal subunit; part of the 5S rRNA/L5/L18/L25 subcomplex. Contacts the 5S rRNA and the P site tRNA. Forms a bridge to the 30S subunit in the 70S ribosome.</text>
</comment>
<comment type="similarity">
    <text evidence="1">Belongs to the universal ribosomal protein uL5 family.</text>
</comment>
<accession>Q7WRB1</accession>
<protein>
    <recommendedName>
        <fullName evidence="1">Large ribosomal subunit protein uL5</fullName>
    </recommendedName>
    <alternativeName>
        <fullName evidence="2">50S ribosomal protein L5</fullName>
    </alternativeName>
</protein>
<organism>
    <name type="scientific">Bordetella bronchiseptica (strain ATCC BAA-588 / NCTC 13252 / RB50)</name>
    <name type="common">Alcaligenes bronchisepticus</name>
    <dbReference type="NCBI Taxonomy" id="257310"/>
    <lineage>
        <taxon>Bacteria</taxon>
        <taxon>Pseudomonadati</taxon>
        <taxon>Pseudomonadota</taxon>
        <taxon>Betaproteobacteria</taxon>
        <taxon>Burkholderiales</taxon>
        <taxon>Alcaligenaceae</taxon>
        <taxon>Bordetella</taxon>
    </lineage>
</organism>
<gene>
    <name evidence="1" type="primary">rplE</name>
    <name type="ordered locus">BB0043</name>
</gene>
<evidence type="ECO:0000255" key="1">
    <source>
        <dbReference type="HAMAP-Rule" id="MF_01333"/>
    </source>
</evidence>
<evidence type="ECO:0000305" key="2"/>
<sequence>MSRLQEFYKSKVVADLQAKFGYKCVMEVPRITKITLNMGVSEAVADKKVIEHAVSDLTKISGQKPVVTKTRKAIAGFKIRENYPIGCMVTLRGQRMYEFLDRLVAVALPRVRDFRGISGRAFDGRGNYNIGVKEQIIFPEIEYDKIDALRGLNISITTTAKTDDEAKALLTAFSFPFRN</sequence>
<reference key="1">
    <citation type="journal article" date="2003" name="Nat. Genet.">
        <title>Comparative analysis of the genome sequences of Bordetella pertussis, Bordetella parapertussis and Bordetella bronchiseptica.</title>
        <authorList>
            <person name="Parkhill J."/>
            <person name="Sebaihia M."/>
            <person name="Preston A."/>
            <person name="Murphy L.D."/>
            <person name="Thomson N.R."/>
            <person name="Harris D.E."/>
            <person name="Holden M.T.G."/>
            <person name="Churcher C.M."/>
            <person name="Bentley S.D."/>
            <person name="Mungall K.L."/>
            <person name="Cerdeno-Tarraga A.-M."/>
            <person name="Temple L."/>
            <person name="James K.D."/>
            <person name="Harris B."/>
            <person name="Quail M.A."/>
            <person name="Achtman M."/>
            <person name="Atkin R."/>
            <person name="Baker S."/>
            <person name="Basham D."/>
            <person name="Bason N."/>
            <person name="Cherevach I."/>
            <person name="Chillingworth T."/>
            <person name="Collins M."/>
            <person name="Cronin A."/>
            <person name="Davis P."/>
            <person name="Doggett J."/>
            <person name="Feltwell T."/>
            <person name="Goble A."/>
            <person name="Hamlin N."/>
            <person name="Hauser H."/>
            <person name="Holroyd S."/>
            <person name="Jagels K."/>
            <person name="Leather S."/>
            <person name="Moule S."/>
            <person name="Norberczak H."/>
            <person name="O'Neil S."/>
            <person name="Ormond D."/>
            <person name="Price C."/>
            <person name="Rabbinowitsch E."/>
            <person name="Rutter S."/>
            <person name="Sanders M."/>
            <person name="Saunders D."/>
            <person name="Seeger K."/>
            <person name="Sharp S."/>
            <person name="Simmonds M."/>
            <person name="Skelton J."/>
            <person name="Squares R."/>
            <person name="Squares S."/>
            <person name="Stevens K."/>
            <person name="Unwin L."/>
            <person name="Whitehead S."/>
            <person name="Barrell B.G."/>
            <person name="Maskell D.J."/>
        </authorList>
    </citation>
    <scope>NUCLEOTIDE SEQUENCE [LARGE SCALE GENOMIC DNA]</scope>
    <source>
        <strain>ATCC BAA-588 / NCTC 13252 / RB50</strain>
    </source>
</reference>
<proteinExistence type="inferred from homology"/>